<gene>
    <name type="ORF">ORF3</name>
</gene>
<organism>
    <name type="scientific">Hepatitis E virus genotype 1 (isolate Human/China/HeBei/1987)</name>
    <name type="common">HEV</name>
    <dbReference type="NCBI Taxonomy" id="652674"/>
    <lineage>
        <taxon>Viruses</taxon>
        <taxon>Riboviria</taxon>
        <taxon>Orthornavirae</taxon>
        <taxon>Kitrinoviricota</taxon>
        <taxon>Alsuviricetes</taxon>
        <taxon>Hepelivirales</taxon>
        <taxon>Hepeviridae</taxon>
        <taxon>Orthohepevirinae</taxon>
        <taxon>Paslahepevirus</taxon>
        <taxon>Hepatitis E virus</taxon>
    </lineage>
</organism>
<comment type="function">
    <text evidence="5 6 7 8 9 10 11 13">Small multifunctional phosphoprotein involved in virion morphogenesis, egress and counteracting host innate immunity (PubMed:19339479, PubMed:21068219, PubMed:28096411, PubMed:30532200). Plays critical roles in the final steps of viral release by interacting with host TSG101, a member of the vacuolar protein-sorting pathway and using other cellular host proteins involved in vesicle formation pathway (PubMed:19339479, PubMed:21068219). Also acts as a viroporin and forms ion conductive pores allowing viral particle release (PubMed:28096411). Impairs the generation of type I interferon by down-regulating host TLR3 and TLR7 as well as their downstream signaling pathways (PubMed:27270888, PubMed:29872132). Down-regulates the phosphorylation of host IRF3 via the interaction with host SIRP-alpha, thereby inhibiting IFN-I expression (PubMed:26492885). Interacts with host microtubules (PubMed:19369329).</text>
</comment>
<comment type="subunit">
    <text evidence="2 7 8 10 12 13">Forms homooligomers (PubMed:28096411, PubMed:30532200). Interacts with host SRC, HCK, FYN, PIK3R3 and GRB2 (via SH3 domain); binding does not activate the kinases. Interacts with host AMBP/bikunin and AMBP/alpha-1-microglobulin peptides. Interacts with host HPX/hemopexin. Interacts (when phosphorylated) with capsid protein ORF2 (By similarity). Interacts with host TSG101; this interaction plays a role in viral release from the host cell (PubMed:21068219, PubMed:30068652). Interacts with host SIRPA; this interaction down-regulates the phosphorylation of host IRF3 (PubMed:26492885).</text>
</comment>
<comment type="subcellular location">
    <subcellularLocation>
        <location evidence="10">Host endoplasmic reticulum membrane</location>
        <topology evidence="13">Lipid-anchor</topology>
    </subcellularLocation>
    <subcellularLocation>
        <location evidence="6">Host cytoplasm</location>
        <location evidence="6">Host cytoskeleton</location>
    </subcellularLocation>
    <subcellularLocation>
        <location>Virion</location>
    </subcellularLocation>
    <subcellularLocation>
        <location evidence="13">Host cell membrane</location>
        <topology evidence="13">Lipid-anchor</topology>
    </subcellularLocation>
    <text evidence="5 6">The N-terminal region seems to associate with the cytoskeleton probably via one of its hydrophobic regions (PubMed:19369329). Present on the surface of the membrane-wrapped virions (PubMed:19339479).</text>
</comment>
<comment type="domain">
    <text evidence="7 12">The PSAP motif is necessary for the release of membrane-wrapped virions from infected cells.</text>
</comment>
<comment type="PTM">
    <text evidence="13">Palmitoylated in the N-terminus.</text>
</comment>
<comment type="miscellaneous">
    <text evidence="15">The viral particles present in feces and bile are non-enveloped, while those in circulating blood and culture supernatants are covered with a cellular membrane (quasi-enveloped).</text>
</comment>
<comment type="similarity">
    <text evidence="15">Belongs to the hepevirus ORF3 protein family.</text>
</comment>
<comment type="sequence caution" evidence="15">
    <conflict type="erroneous initiation">
        <sequence resource="EMBL-CDS" id="AAA03190"/>
    </conflict>
    <text>Extended N-terminus.</text>
</comment>
<dbReference type="EMBL" id="M94177">
    <property type="status" value="NOT_ANNOTATED_CDS"/>
    <property type="molecule type" value="Genomic_RNA"/>
</dbReference>
<dbReference type="EMBL" id="L08816">
    <property type="protein sequence ID" value="AAA03190.1"/>
    <property type="status" value="ALT_INIT"/>
    <property type="molecule type" value="Genomic_RNA"/>
</dbReference>
<dbReference type="IntAct" id="Q81870">
    <property type="interactions" value="1"/>
</dbReference>
<dbReference type="TCDB" id="1.A.149.1.1">
    <property type="family name" value="the orf3 protein of hepititis e virus (orf3-hev) family"/>
</dbReference>
<dbReference type="SABIO-RK" id="Q81870"/>
<dbReference type="Proteomes" id="UP000006705">
    <property type="component" value="Segment"/>
</dbReference>
<dbReference type="Proteomes" id="UP000102625">
    <property type="component" value="Genome"/>
</dbReference>
<dbReference type="GO" id="GO:0044167">
    <property type="term" value="C:host cell endoplasmic reticulum membrane"/>
    <property type="evidence" value="ECO:0007669"/>
    <property type="project" value="UniProtKB-SubCell"/>
</dbReference>
<dbReference type="GO" id="GO:0020002">
    <property type="term" value="C:host cell plasma membrane"/>
    <property type="evidence" value="ECO:0007669"/>
    <property type="project" value="UniProtKB-SubCell"/>
</dbReference>
<dbReference type="GO" id="GO:0044163">
    <property type="term" value="C:host cytoskeleton"/>
    <property type="evidence" value="ECO:0007669"/>
    <property type="project" value="UniProtKB-SubCell"/>
</dbReference>
<dbReference type="GO" id="GO:0016020">
    <property type="term" value="C:membrane"/>
    <property type="evidence" value="ECO:0007669"/>
    <property type="project" value="UniProtKB-KW"/>
</dbReference>
<dbReference type="GO" id="GO:0044423">
    <property type="term" value="C:virion component"/>
    <property type="evidence" value="ECO:0007669"/>
    <property type="project" value="UniProtKB-KW"/>
</dbReference>
<dbReference type="GO" id="GO:0039548">
    <property type="term" value="P:symbiont-mediated suppression of host cytoplasmic pattern recognition receptor signaling pathway via inhibition of IRF3 activity"/>
    <property type="evidence" value="ECO:0007669"/>
    <property type="project" value="UniProtKB-KW"/>
</dbReference>
<dbReference type="InterPro" id="IPR003384">
    <property type="entry name" value="HEV_Orf2"/>
</dbReference>
<dbReference type="Pfam" id="PF02444">
    <property type="entry name" value="HEV_ORF1"/>
    <property type="match status" value="1"/>
</dbReference>
<accession>Q81870</accession>
<name>ORF3_HEVCH</name>
<keyword id="KW-1032">Host cell membrane</keyword>
<keyword id="KW-1035">Host cytoplasm</keyword>
<keyword id="KW-1037">Host cytoskeleton</keyword>
<keyword id="KW-1038">Host endoplasmic reticulum</keyword>
<keyword id="KW-1043">Host membrane</keyword>
<keyword id="KW-0945">Host-virus interaction</keyword>
<keyword id="KW-1090">Inhibition of host innate immune response by virus</keyword>
<keyword id="KW-1092">Inhibition of host IRF3 by virus</keyword>
<keyword id="KW-1113">Inhibition of host RLR pathway by virus</keyword>
<keyword id="KW-0449">Lipoprotein</keyword>
<keyword id="KW-0472">Membrane</keyword>
<keyword id="KW-0597">Phosphoprotein</keyword>
<keyword id="KW-1185">Reference proteome</keyword>
<keyword id="KW-0899">Viral immunoevasion</keyword>
<keyword id="KW-0946">Virion</keyword>
<proteinExistence type="evidence at protein level"/>
<feature type="chain" id="PRO_0000402398" description="Protein ORF3">
    <location>
        <begin position="1"/>
        <end position="114"/>
    </location>
</feature>
<feature type="region of interest" description="Membrane association" evidence="13">
    <location>
        <begin position="1"/>
        <end position="28"/>
    </location>
</feature>
<feature type="region of interest" description="Hydrophobic" evidence="1">
    <location>
        <begin position="6"/>
        <end position="22"/>
    </location>
</feature>
<feature type="region of interest" description="Induction of host SIRPA expression" evidence="8">
    <location>
        <begin position="6"/>
        <end position="22"/>
    </location>
</feature>
<feature type="region of interest" description="Interaction with host HPX" evidence="1">
    <location>
        <begin position="28"/>
        <end position="68"/>
    </location>
</feature>
<feature type="region of interest" description="Hydrophobic" evidence="1">
    <location>
        <begin position="33"/>
        <end position="53"/>
    </location>
</feature>
<feature type="region of interest" description="Interaction with the capsid protein" evidence="1">
    <location>
        <begin position="48"/>
        <end position="72"/>
    </location>
</feature>
<feature type="region of interest" description="Homodimerization, and interaction with host AMBP/bikunin" evidence="1">
    <location>
        <begin position="72"/>
        <end position="114"/>
    </location>
</feature>
<feature type="region of interest" description="Disordered" evidence="4">
    <location>
        <begin position="91"/>
        <end position="114"/>
    </location>
</feature>
<feature type="region of interest" description="Interaction with host SRC, HCK, FYN, PIK3R3 and GRB2" evidence="1">
    <location>
        <begin position="95"/>
        <end position="104"/>
    </location>
</feature>
<feature type="short sequence motif" description="PTAP/PSAP motif" evidence="7">
    <location>
        <begin position="96"/>
        <end position="99"/>
    </location>
</feature>
<feature type="modified residue" description="Phosphoserine; by host" evidence="3">
    <location>
        <position position="71"/>
    </location>
</feature>
<reference key="1">
    <citation type="journal article" date="1993" name="Virus Res.">
        <title>The sequence of hepatitis E virus isolated directly from a single source during an outbreak in China.</title>
        <authorList>
            <person name="Bi S.L."/>
            <person name="Purdy M.A."/>
            <person name="McCaustland K.A."/>
            <person name="Margolis H.S."/>
            <person name="Bradley D.W."/>
        </authorList>
    </citation>
    <scope>NUCLEOTIDE SEQUENCE [GENOMIC RNA]</scope>
</reference>
<reference key="2">
    <citation type="journal article" date="2009" name="J. Gen. Virol.">
        <title>ORF3 protein of hepatitis E virus is essential for virion release from infected cells.</title>
        <authorList>
            <person name="Yamada K."/>
            <person name="Takahashi M."/>
            <person name="Hoshino Y."/>
            <person name="Takahashi H."/>
            <person name="Ichiyama K."/>
            <person name="Nagashima S."/>
            <person name="Tanaka T."/>
            <person name="Okamoto H."/>
        </authorList>
    </citation>
    <scope>FUNCTION</scope>
    <scope>SUBCELLULAR LOCATION</scope>
</reference>
<reference key="3">
    <citation type="journal article" date="2009" name="J. Virol.">
        <title>The hepatitis E virus open reading frame 3 product interacts with microtubules and interferes with their dynamics.</title>
        <authorList>
            <person name="Kannan H."/>
            <person name="Fan S."/>
            <person name="Patel D."/>
            <person name="Bossis I."/>
            <person name="Zhang Y.J."/>
        </authorList>
    </citation>
    <scope>FUNCTION</scope>
    <scope>SUBCELLULAR LOCATION</scope>
</reference>
<reference key="4">
    <citation type="journal article" date="2011" name="J. Gen. Virol.">
        <title>A PSAP motif in the ORF3 protein of hepatitis E virus is necessary for virion release from infected cells.</title>
        <authorList>
            <person name="Nagashima S."/>
            <person name="Takahashi M."/>
            <person name="Jirintai S."/>
            <person name="Tanaka T."/>
            <person name="Yamada K."/>
            <person name="Nishizawa T."/>
            <person name="Okamoto H."/>
        </authorList>
    </citation>
    <scope>FUNCTION</scope>
    <scope>INTERACTION WITH HOST TSG101</scope>
    <scope>MOTIF</scope>
    <scope>SUBCELLULAR LOCATION</scope>
</reference>
<reference key="5">
    <citation type="journal article" date="2016" name="Immunol. Res.">
        <title>Hepatitis E virus infection activates signal regulator protein alpha to down-regulate type I interferon.</title>
        <authorList>
            <person name="Huang F."/>
            <person name="Yang C."/>
            <person name="Yu W."/>
            <person name="Bi Y."/>
            <person name="Long F."/>
            <person name="Wang J."/>
            <person name="Li Y."/>
            <person name="Jing S."/>
        </authorList>
    </citation>
    <scope>FUNCTION</scope>
    <scope>INTERACTION WITH HOST SIRPA</scope>
    <source>
        <strain>KM01</strain>
    </source>
</reference>
<reference key="6">
    <citation type="journal article" date="2016" name="Sci. Rep.">
        <title>The ORF3 Protein of Genotype 1 Hepatitis E Virus Suppresses TLR3-induced NF-kappaB Signaling via TRADD and RIP1.</title>
        <authorList>
            <person name="He M."/>
            <person name="Wang M."/>
            <person name="Huang Y."/>
            <person name="Peng W."/>
            <person name="Zheng Z."/>
            <person name="Xia N."/>
            <person name="Xu J."/>
            <person name="Tian D."/>
        </authorList>
    </citation>
    <scope>FUNCTION</scope>
</reference>
<reference key="7">
    <citation type="journal article" date="2017" name="Proc. Natl. Acad. Sci. U.S.A.">
        <title>Hepatitis E virus ORF3 is a functional ion channel required for release of infectious particles.</title>
        <authorList>
            <person name="Ding Q."/>
            <person name="Heller B."/>
            <person name="Capuccino J.M."/>
            <person name="Song B."/>
            <person name="Nimgaonkar I."/>
            <person name="Hrebikova G."/>
            <person name="Contreras J.E."/>
            <person name="Ploss A."/>
        </authorList>
    </citation>
    <scope>FUNCTION</scope>
    <scope>SUBCELLULAR LOCATION</scope>
    <scope>SUBUNIT</scope>
</reference>
<reference key="8">
    <citation type="journal article" date="2018" name="J. Virol.">
        <title>Potent Inhibition of Hepatitis E Virus Release by a Cyclic Peptide Inhibitor of the Interaction between Viral Open Reading Frame 3 Protein and Host Tumor Susceptibility Gene 101.</title>
        <authorList>
            <person name="Anang S."/>
            <person name="Kaushik N."/>
            <person name="Hingane S."/>
            <person name="Kumari A."/>
            <person name="Gupta J."/>
            <person name="Asthana S."/>
            <person name="Shalimar X."/>
            <person name="Nayak B."/>
            <person name="Ranjith-Kumar C.T."/>
            <person name="Surjit M."/>
        </authorList>
    </citation>
    <scope>DOMAIN</scope>
    <scope>INTERACTION WITH HOST TSG101</scope>
</reference>
<reference key="9">
    <citation type="journal article" date="2018" name="Sci. Rep.">
        <title>HEV ORF3 downregulates TLR7 to inhibit the generation of type I interferon via impairment of multiple signaling pathways.</title>
        <authorList>
            <person name="Lei Q."/>
            <person name="Li L."/>
            <person name="Zhang S."/>
            <person name="Li T."/>
            <person name="Zhang X."/>
            <person name="Ding X."/>
            <person name="Qin B."/>
        </authorList>
    </citation>
    <scope>FUNCTION</scope>
</reference>
<reference key="10">
    <citation type="journal article" date="2018" name="PLoS Pathog.">
        <title>Palmitoylation mediates membrane association of hepatitis E virus ORF3 protein and is required for infectious particle secretion.</title>
        <authorList>
            <person name="Gouttenoire J."/>
            <person name="Pollan A."/>
            <person name="Abrami L."/>
            <person name="Oechslin N."/>
            <person name="Mauron J."/>
            <person name="Matter M."/>
            <person name="Oppliger J."/>
            <person name="Szkolnicka D."/>
            <person name="Dao Thi V.L."/>
            <person name="van der Goot F.G."/>
            <person name="Moradpour D."/>
        </authorList>
    </citation>
    <scope>PALMITOYLATION</scope>
    <scope>SUBUNIT</scope>
    <scope>TOPOLOGY</scope>
    <scope>FUNCTION</scope>
</reference>
<organismHost>
    <name type="scientific">Homo sapiens</name>
    <name type="common">Human</name>
    <dbReference type="NCBI Taxonomy" id="9606"/>
</organismHost>
<sequence length="114" mass="11684">MGSRPCALGLFCCCSSCFCLCCPRHRPVSRLAAAVGGAAAVPAVVSGVTGLILSPSQSPIFIQPTPSPPMSPLRPGLDLVFANPPDHSAPLGVTRPSAPPLPHVVDLPQLGPRR</sequence>
<evidence type="ECO:0000250" key="1"/>
<evidence type="ECO:0000250" key="2">
    <source>
        <dbReference type="UniProtKB" id="O90299"/>
    </source>
</evidence>
<evidence type="ECO:0000250" key="3">
    <source>
        <dbReference type="UniProtKB" id="Q68984"/>
    </source>
</evidence>
<evidence type="ECO:0000256" key="4">
    <source>
        <dbReference type="SAM" id="MobiDB-lite"/>
    </source>
</evidence>
<evidence type="ECO:0000269" key="5">
    <source>
    </source>
</evidence>
<evidence type="ECO:0000269" key="6">
    <source>
    </source>
</evidence>
<evidence type="ECO:0000269" key="7">
    <source>
    </source>
</evidence>
<evidence type="ECO:0000269" key="8">
    <source>
    </source>
</evidence>
<evidence type="ECO:0000269" key="9">
    <source>
    </source>
</evidence>
<evidence type="ECO:0000269" key="10">
    <source>
    </source>
</evidence>
<evidence type="ECO:0000269" key="11">
    <source>
    </source>
</evidence>
<evidence type="ECO:0000269" key="12">
    <source>
    </source>
</evidence>
<evidence type="ECO:0000269" key="13">
    <source>
    </source>
</evidence>
<evidence type="ECO:0000303" key="14">
    <source>
    </source>
</evidence>
<evidence type="ECO:0000305" key="15"/>
<protein>
    <recommendedName>
        <fullName>Protein ORF3</fullName>
        <shortName>pORF3</shortName>
    </recommendedName>
    <alternativeName>
        <fullName evidence="14">Vp13</fullName>
    </alternativeName>
</protein>